<dbReference type="EC" id="2.4.1.182"/>
<dbReference type="EMBL" id="L42023">
    <property type="protein sequence ID" value="AAC22715.1"/>
    <property type="molecule type" value="Genomic_DNA"/>
</dbReference>
<dbReference type="EMBL" id="X87416">
    <property type="protein sequence ID" value="CAA60866.1"/>
    <property type="molecule type" value="Genomic_DNA"/>
</dbReference>
<dbReference type="RefSeq" id="NP_439218.1">
    <property type="nucleotide sequence ID" value="NC_000907.1"/>
</dbReference>
<dbReference type="SMR" id="P45011"/>
<dbReference type="STRING" id="71421.HI_1060"/>
<dbReference type="CAZy" id="GT19">
    <property type="family name" value="Glycosyltransferase Family 19"/>
</dbReference>
<dbReference type="EnsemblBacteria" id="AAC22715">
    <property type="protein sequence ID" value="AAC22715"/>
    <property type="gene ID" value="HI_1060"/>
</dbReference>
<dbReference type="KEGG" id="hin:HI_1060"/>
<dbReference type="PATRIC" id="fig|71421.8.peg.1104"/>
<dbReference type="eggNOG" id="COG0763">
    <property type="taxonomic scope" value="Bacteria"/>
</dbReference>
<dbReference type="HOGENOM" id="CLU_036577_3_0_6"/>
<dbReference type="OrthoDB" id="9801642at2"/>
<dbReference type="PhylomeDB" id="P45011"/>
<dbReference type="BioCyc" id="HINF71421:G1GJ1-1097-MONOMER"/>
<dbReference type="UniPathway" id="UPA00973"/>
<dbReference type="Proteomes" id="UP000000579">
    <property type="component" value="Chromosome"/>
</dbReference>
<dbReference type="GO" id="GO:0016020">
    <property type="term" value="C:membrane"/>
    <property type="evidence" value="ECO:0007669"/>
    <property type="project" value="GOC"/>
</dbReference>
<dbReference type="GO" id="GO:0008915">
    <property type="term" value="F:lipid-A-disaccharide synthase activity"/>
    <property type="evidence" value="ECO:0007669"/>
    <property type="project" value="UniProtKB-UniRule"/>
</dbReference>
<dbReference type="GO" id="GO:0005543">
    <property type="term" value="F:phospholipid binding"/>
    <property type="evidence" value="ECO:0000318"/>
    <property type="project" value="GO_Central"/>
</dbReference>
<dbReference type="GO" id="GO:0009245">
    <property type="term" value="P:lipid A biosynthetic process"/>
    <property type="evidence" value="ECO:0000318"/>
    <property type="project" value="GO_Central"/>
</dbReference>
<dbReference type="HAMAP" id="MF_00392">
    <property type="entry name" value="LpxB"/>
    <property type="match status" value="1"/>
</dbReference>
<dbReference type="InterPro" id="IPR003835">
    <property type="entry name" value="Glyco_trans_19"/>
</dbReference>
<dbReference type="NCBIfam" id="TIGR00215">
    <property type="entry name" value="lpxB"/>
    <property type="match status" value="1"/>
</dbReference>
<dbReference type="PANTHER" id="PTHR30372">
    <property type="entry name" value="LIPID-A-DISACCHARIDE SYNTHASE"/>
    <property type="match status" value="1"/>
</dbReference>
<dbReference type="PANTHER" id="PTHR30372:SF4">
    <property type="entry name" value="LIPID-A-DISACCHARIDE SYNTHASE, MITOCHONDRIAL-RELATED"/>
    <property type="match status" value="1"/>
</dbReference>
<dbReference type="Pfam" id="PF02684">
    <property type="entry name" value="LpxB"/>
    <property type="match status" value="1"/>
</dbReference>
<dbReference type="SUPFAM" id="SSF53756">
    <property type="entry name" value="UDP-Glycosyltransferase/glycogen phosphorylase"/>
    <property type="match status" value="1"/>
</dbReference>
<protein>
    <recommendedName>
        <fullName>Lipid-A-disaccharide synthase</fullName>
        <ecNumber>2.4.1.182</ecNumber>
    </recommendedName>
</protein>
<proteinExistence type="inferred from homology"/>
<feature type="chain" id="PRO_0000190168" description="Lipid-A-disaccharide synthase">
    <location>
        <begin position="1"/>
        <end position="390"/>
    </location>
</feature>
<feature type="sequence conflict" description="In Ref. 3; CAA60866." evidence="1" ref="3">
    <original>V</original>
    <variation>A</variation>
    <location>
        <position position="342"/>
    </location>
</feature>
<feature type="sequence conflict" description="In Ref. 3; CAA60866." evidence="1" ref="3">
    <original>A</original>
    <variation>S</variation>
    <location>
        <position position="350"/>
    </location>
</feature>
<feature type="sequence conflict" description="In Ref. 3; CAA60866." evidence="1" ref="3">
    <original>KE</original>
    <variation>TK</variation>
    <location>
        <begin position="387"/>
        <end position="388"/>
    </location>
</feature>
<keyword id="KW-0328">Glycosyltransferase</keyword>
<keyword id="KW-0441">Lipid A biosynthesis</keyword>
<keyword id="KW-0444">Lipid biosynthesis</keyword>
<keyword id="KW-0443">Lipid metabolism</keyword>
<keyword id="KW-1185">Reference proteome</keyword>
<keyword id="KW-0808">Transferase</keyword>
<evidence type="ECO:0000305" key="1"/>
<name>LPXB_HAEIN</name>
<gene>
    <name type="primary">lpxB</name>
    <name type="ordered locus">HI_1060</name>
</gene>
<comment type="function">
    <text>Condensation of UDP-2,3-diacylglucosamine and 2,3-diacylglucosamine-1-phosphate to form lipid A disaccharide, a precursor of lipid A, a phosphorylated glycolipid that anchors the lipopolysaccharide to the outer membrane of the cell.</text>
</comment>
<comment type="catalytic activity">
    <reaction>
        <text>a lipid X + a UDP-2-N,3-O-bis[(3R)-3-hydroxyacyl]-alpha-D-glucosamine = a lipid A disaccharide + UDP + H(+)</text>
        <dbReference type="Rhea" id="RHEA:67828"/>
        <dbReference type="ChEBI" id="CHEBI:15378"/>
        <dbReference type="ChEBI" id="CHEBI:58223"/>
        <dbReference type="ChEBI" id="CHEBI:137748"/>
        <dbReference type="ChEBI" id="CHEBI:176338"/>
        <dbReference type="ChEBI" id="CHEBI:176343"/>
        <dbReference type="EC" id="2.4.1.182"/>
    </reaction>
</comment>
<comment type="pathway">
    <text>Bacterial outer membrane biogenesis; LPS lipid A biosynthesis.</text>
</comment>
<comment type="similarity">
    <text evidence="1">Belongs to the LpxB family.</text>
</comment>
<organism>
    <name type="scientific">Haemophilus influenzae (strain ATCC 51907 / DSM 11121 / KW20 / Rd)</name>
    <dbReference type="NCBI Taxonomy" id="71421"/>
    <lineage>
        <taxon>Bacteria</taxon>
        <taxon>Pseudomonadati</taxon>
        <taxon>Pseudomonadota</taxon>
        <taxon>Gammaproteobacteria</taxon>
        <taxon>Pasteurellales</taxon>
        <taxon>Pasteurellaceae</taxon>
        <taxon>Haemophilus</taxon>
    </lineage>
</organism>
<accession>P45011</accession>
<accession>P94807</accession>
<reference key="1">
    <citation type="journal article" date="1995" name="Science">
        <title>Whole-genome random sequencing and assembly of Haemophilus influenzae Rd.</title>
        <authorList>
            <person name="Fleischmann R.D."/>
            <person name="Adams M.D."/>
            <person name="White O."/>
            <person name="Clayton R.A."/>
            <person name="Kirkness E.F."/>
            <person name="Kerlavage A.R."/>
            <person name="Bult C.J."/>
            <person name="Tomb J.-F."/>
            <person name="Dougherty B.A."/>
            <person name="Merrick J.M."/>
            <person name="McKenney K."/>
            <person name="Sutton G.G."/>
            <person name="FitzHugh W."/>
            <person name="Fields C.A."/>
            <person name="Gocayne J.D."/>
            <person name="Scott J.D."/>
            <person name="Shirley R."/>
            <person name="Liu L.-I."/>
            <person name="Glodek A."/>
            <person name="Kelley J.M."/>
            <person name="Weidman J.F."/>
            <person name="Phillips C.A."/>
            <person name="Spriggs T."/>
            <person name="Hedblom E."/>
            <person name="Cotton M.D."/>
            <person name="Utterback T.R."/>
            <person name="Hanna M.C."/>
            <person name="Nguyen D.T."/>
            <person name="Saudek D.M."/>
            <person name="Brandon R.C."/>
            <person name="Fine L.D."/>
            <person name="Fritchman J.L."/>
            <person name="Fuhrmann J.L."/>
            <person name="Geoghagen N.S.M."/>
            <person name="Gnehm C.L."/>
            <person name="McDonald L.A."/>
            <person name="Small K.V."/>
            <person name="Fraser C.M."/>
            <person name="Smith H.O."/>
            <person name="Venter J.C."/>
        </authorList>
    </citation>
    <scope>NUCLEOTIDE SEQUENCE [LARGE SCALE GENOMIC DNA]</scope>
    <source>
        <strain>ATCC 51907 / DSM 11121 / KW20 / Rd</strain>
    </source>
</reference>
<reference key="2">
    <citation type="submission" date="1996-09" db="EMBL/GenBank/DDBJ databases">
        <authorList>
            <person name="White O."/>
            <person name="Clayton R.A."/>
            <person name="Kerlavage A.R."/>
            <person name="Fleischmann R.D."/>
        </authorList>
    </citation>
    <scope>SEQUENCE REVISION</scope>
</reference>
<reference key="3">
    <citation type="journal article" date="1996" name="Gene">
        <title>Cloning and expression of genes encoding lipid A biosynthesis from Haemophilus influenzae type b.</title>
        <authorList>
            <person name="Servos S."/>
            <person name="Khan S."/>
            <person name="Maskell D."/>
        </authorList>
    </citation>
    <scope>NUCLEOTIDE SEQUENCE [GENOMIC DNA]</scope>
    <source>
        <strain>RM 7004 / Serotype B</strain>
    </source>
</reference>
<sequence length="390" mass="43637">MNKTNPTIALVAGEVSGDILGAGLIRQLKAHYPNARFIGIAGPRMLAEGCETLVDMEELSVMGLAEILKHLPRLLKIRKNVIQTMLQEKPDVYIGIDAPDFNLDVELKLKANGIKTIHYVSPSVWAWRQNRIHKIAKATHQVLAFLPFEKAFYDKFNVPCRFIGHTMADAIPLKPNRAEACQTLQIDPAQRYLAILVGSRGSEVEFLAEPFLKTALLLKEQFPDLQFLVPLVNEKRRIQFETIKAKITPNLDLHLIDGNARQAMIAADATLLASGTAALEAMLCKSPMVVGYRMKPLTYFLAKRLVKTDYISLPNLLANEMLVPEMIQEECTPELLAEKLSVYLSDDESAVKNRHVLIQHFTDLHQKIQCNADKQAAQAVIDLLEGKENV</sequence>